<accession>Q4FVQ7</accession>
<gene>
    <name evidence="1" type="primary">dnaJ</name>
    <name type="ordered locus">Psyc_0027</name>
</gene>
<name>DNAJ_PSYA2</name>
<evidence type="ECO:0000255" key="1">
    <source>
        <dbReference type="HAMAP-Rule" id="MF_01152"/>
    </source>
</evidence>
<feature type="chain" id="PRO_1000085257" description="Chaperone protein DnaJ">
    <location>
        <begin position="1"/>
        <end position="374"/>
    </location>
</feature>
<feature type="domain" description="J" evidence="1">
    <location>
        <begin position="5"/>
        <end position="70"/>
    </location>
</feature>
<feature type="repeat" description="CXXCXGXG motif">
    <location>
        <begin position="146"/>
        <end position="153"/>
    </location>
</feature>
<feature type="repeat" description="CXXCXGXG motif">
    <location>
        <begin position="163"/>
        <end position="170"/>
    </location>
</feature>
<feature type="repeat" description="CXXCXGXG motif">
    <location>
        <begin position="185"/>
        <end position="192"/>
    </location>
</feature>
<feature type="repeat" description="CXXCXGXG motif">
    <location>
        <begin position="199"/>
        <end position="206"/>
    </location>
</feature>
<feature type="zinc finger region" description="CR-type" evidence="1">
    <location>
        <begin position="133"/>
        <end position="211"/>
    </location>
</feature>
<feature type="binding site" evidence="1">
    <location>
        <position position="146"/>
    </location>
    <ligand>
        <name>Zn(2+)</name>
        <dbReference type="ChEBI" id="CHEBI:29105"/>
        <label>1</label>
    </ligand>
</feature>
<feature type="binding site" evidence="1">
    <location>
        <position position="149"/>
    </location>
    <ligand>
        <name>Zn(2+)</name>
        <dbReference type="ChEBI" id="CHEBI:29105"/>
        <label>1</label>
    </ligand>
</feature>
<feature type="binding site" evidence="1">
    <location>
        <position position="163"/>
    </location>
    <ligand>
        <name>Zn(2+)</name>
        <dbReference type="ChEBI" id="CHEBI:29105"/>
        <label>2</label>
    </ligand>
</feature>
<feature type="binding site" evidence="1">
    <location>
        <position position="166"/>
    </location>
    <ligand>
        <name>Zn(2+)</name>
        <dbReference type="ChEBI" id="CHEBI:29105"/>
        <label>2</label>
    </ligand>
</feature>
<feature type="binding site" evidence="1">
    <location>
        <position position="185"/>
    </location>
    <ligand>
        <name>Zn(2+)</name>
        <dbReference type="ChEBI" id="CHEBI:29105"/>
        <label>2</label>
    </ligand>
</feature>
<feature type="binding site" evidence="1">
    <location>
        <position position="188"/>
    </location>
    <ligand>
        <name>Zn(2+)</name>
        <dbReference type="ChEBI" id="CHEBI:29105"/>
        <label>2</label>
    </ligand>
</feature>
<feature type="binding site" evidence="1">
    <location>
        <position position="199"/>
    </location>
    <ligand>
        <name>Zn(2+)</name>
        <dbReference type="ChEBI" id="CHEBI:29105"/>
        <label>1</label>
    </ligand>
</feature>
<feature type="binding site" evidence="1">
    <location>
        <position position="202"/>
    </location>
    <ligand>
        <name>Zn(2+)</name>
        <dbReference type="ChEBI" id="CHEBI:29105"/>
        <label>1</label>
    </ligand>
</feature>
<proteinExistence type="inferred from homology"/>
<comment type="function">
    <text evidence="1">Participates actively in the response to hyperosmotic and heat shock by preventing the aggregation of stress-denatured proteins and by disaggregating proteins, also in an autonomous, DnaK-independent fashion. Unfolded proteins bind initially to DnaJ; upon interaction with the DnaJ-bound protein, DnaK hydrolyzes its bound ATP, resulting in the formation of a stable complex. GrpE releases ADP from DnaK; ATP binding to DnaK triggers the release of the substrate protein, thus completing the reaction cycle. Several rounds of ATP-dependent interactions between DnaJ, DnaK and GrpE are required for fully efficient folding. Also involved, together with DnaK and GrpE, in the DNA replication of plasmids through activation of initiation proteins.</text>
</comment>
<comment type="cofactor">
    <cofactor evidence="1">
        <name>Zn(2+)</name>
        <dbReference type="ChEBI" id="CHEBI:29105"/>
    </cofactor>
    <text evidence="1">Binds 2 Zn(2+) ions per monomer.</text>
</comment>
<comment type="subunit">
    <text evidence="1">Homodimer.</text>
</comment>
<comment type="subcellular location">
    <subcellularLocation>
        <location evidence="1">Cytoplasm</location>
    </subcellularLocation>
</comment>
<comment type="domain">
    <text evidence="1">The J domain is necessary and sufficient to stimulate DnaK ATPase activity. Zinc center 1 plays an important role in the autonomous, DnaK-independent chaperone activity of DnaJ. Zinc center 2 is essential for interaction with DnaK and for DnaJ activity.</text>
</comment>
<comment type="similarity">
    <text evidence="1">Belongs to the DnaJ family.</text>
</comment>
<sequence>MSKRDFYEILGVSKTADNKEVKRAYRKLAMKYHPDRNSDDPDAEDKFKEASMAYEVLSSEEKRSAYDRMGHAAFENGMGGGGGGGNFQDIFGDIFGNFGDIFGQSRGGGGGRSRRGSDLRYVIELTLEEAVRGCKKEISFTAPAPCDTCDGKGAKNASDIVTCQTCHGQGQVRMQQGFFAVQQACPHCGGTGKQIKNPCSDCHGNGVKDKSRTLEVSIPAGVDDGDRVRLSGEGEAGGAGVQNGDLYVEVRVKPHNVFTRQGADLYMDVPISITDAALGKEVEIPTLDGKVKIKVAEGTQSGKLLRVRGRGVTPVRTTMKGDLICRVVIETPVNLTREQKDLLRQFQDTLDGDSKHQQSPHKKSFFKKIGDLFD</sequence>
<organism>
    <name type="scientific">Psychrobacter arcticus (strain DSM 17307 / VKM B-2377 / 273-4)</name>
    <dbReference type="NCBI Taxonomy" id="259536"/>
    <lineage>
        <taxon>Bacteria</taxon>
        <taxon>Pseudomonadati</taxon>
        <taxon>Pseudomonadota</taxon>
        <taxon>Gammaproteobacteria</taxon>
        <taxon>Moraxellales</taxon>
        <taxon>Moraxellaceae</taxon>
        <taxon>Psychrobacter</taxon>
    </lineage>
</organism>
<dbReference type="EMBL" id="CP000082">
    <property type="protein sequence ID" value="AAZ17901.1"/>
    <property type="molecule type" value="Genomic_DNA"/>
</dbReference>
<dbReference type="RefSeq" id="WP_011279340.1">
    <property type="nucleotide sequence ID" value="NC_007204.1"/>
</dbReference>
<dbReference type="SMR" id="Q4FVQ7"/>
<dbReference type="STRING" id="259536.Psyc_0027"/>
<dbReference type="KEGG" id="par:Psyc_0027"/>
<dbReference type="eggNOG" id="COG0484">
    <property type="taxonomic scope" value="Bacteria"/>
</dbReference>
<dbReference type="HOGENOM" id="CLU_017633_0_7_6"/>
<dbReference type="OrthoDB" id="9779889at2"/>
<dbReference type="Proteomes" id="UP000000546">
    <property type="component" value="Chromosome"/>
</dbReference>
<dbReference type="GO" id="GO:0005737">
    <property type="term" value="C:cytoplasm"/>
    <property type="evidence" value="ECO:0007669"/>
    <property type="project" value="UniProtKB-SubCell"/>
</dbReference>
<dbReference type="GO" id="GO:0005524">
    <property type="term" value="F:ATP binding"/>
    <property type="evidence" value="ECO:0007669"/>
    <property type="project" value="InterPro"/>
</dbReference>
<dbReference type="GO" id="GO:0031072">
    <property type="term" value="F:heat shock protein binding"/>
    <property type="evidence" value="ECO:0007669"/>
    <property type="project" value="InterPro"/>
</dbReference>
<dbReference type="GO" id="GO:0051082">
    <property type="term" value="F:unfolded protein binding"/>
    <property type="evidence" value="ECO:0007669"/>
    <property type="project" value="UniProtKB-UniRule"/>
</dbReference>
<dbReference type="GO" id="GO:0008270">
    <property type="term" value="F:zinc ion binding"/>
    <property type="evidence" value="ECO:0007669"/>
    <property type="project" value="UniProtKB-UniRule"/>
</dbReference>
<dbReference type="GO" id="GO:0051085">
    <property type="term" value="P:chaperone cofactor-dependent protein refolding"/>
    <property type="evidence" value="ECO:0007669"/>
    <property type="project" value="TreeGrafter"/>
</dbReference>
<dbReference type="GO" id="GO:0006260">
    <property type="term" value="P:DNA replication"/>
    <property type="evidence" value="ECO:0007669"/>
    <property type="project" value="UniProtKB-KW"/>
</dbReference>
<dbReference type="GO" id="GO:0042026">
    <property type="term" value="P:protein refolding"/>
    <property type="evidence" value="ECO:0007669"/>
    <property type="project" value="TreeGrafter"/>
</dbReference>
<dbReference type="GO" id="GO:0009408">
    <property type="term" value="P:response to heat"/>
    <property type="evidence" value="ECO:0007669"/>
    <property type="project" value="InterPro"/>
</dbReference>
<dbReference type="CDD" id="cd06257">
    <property type="entry name" value="DnaJ"/>
    <property type="match status" value="1"/>
</dbReference>
<dbReference type="CDD" id="cd10747">
    <property type="entry name" value="DnaJ_C"/>
    <property type="match status" value="1"/>
</dbReference>
<dbReference type="CDD" id="cd10719">
    <property type="entry name" value="DnaJ_zf"/>
    <property type="match status" value="1"/>
</dbReference>
<dbReference type="FunFam" id="1.10.287.110:FF:000034">
    <property type="entry name" value="Chaperone protein DnaJ"/>
    <property type="match status" value="1"/>
</dbReference>
<dbReference type="FunFam" id="2.10.230.10:FF:000002">
    <property type="entry name" value="Molecular chaperone DnaJ"/>
    <property type="match status" value="1"/>
</dbReference>
<dbReference type="FunFam" id="2.60.260.20:FF:000004">
    <property type="entry name" value="Molecular chaperone DnaJ"/>
    <property type="match status" value="1"/>
</dbReference>
<dbReference type="Gene3D" id="1.10.287.110">
    <property type="entry name" value="DnaJ domain"/>
    <property type="match status" value="1"/>
</dbReference>
<dbReference type="Gene3D" id="2.10.230.10">
    <property type="entry name" value="Heat shock protein DnaJ, cysteine-rich domain"/>
    <property type="match status" value="1"/>
</dbReference>
<dbReference type="Gene3D" id="2.60.260.20">
    <property type="entry name" value="Urease metallochaperone UreE, N-terminal domain"/>
    <property type="match status" value="2"/>
</dbReference>
<dbReference type="HAMAP" id="MF_01152">
    <property type="entry name" value="DnaJ"/>
    <property type="match status" value="1"/>
</dbReference>
<dbReference type="InterPro" id="IPR012724">
    <property type="entry name" value="DnaJ"/>
</dbReference>
<dbReference type="InterPro" id="IPR002939">
    <property type="entry name" value="DnaJ_C"/>
</dbReference>
<dbReference type="InterPro" id="IPR001623">
    <property type="entry name" value="DnaJ_domain"/>
</dbReference>
<dbReference type="InterPro" id="IPR008971">
    <property type="entry name" value="HSP40/DnaJ_pept-bd"/>
</dbReference>
<dbReference type="InterPro" id="IPR001305">
    <property type="entry name" value="HSP_DnaJ_Cys-rich_dom"/>
</dbReference>
<dbReference type="InterPro" id="IPR036410">
    <property type="entry name" value="HSP_DnaJ_Cys-rich_dom_sf"/>
</dbReference>
<dbReference type="InterPro" id="IPR036869">
    <property type="entry name" value="J_dom_sf"/>
</dbReference>
<dbReference type="NCBIfam" id="TIGR02349">
    <property type="entry name" value="DnaJ_bact"/>
    <property type="match status" value="1"/>
</dbReference>
<dbReference type="NCBIfam" id="NF008035">
    <property type="entry name" value="PRK10767.1"/>
    <property type="match status" value="1"/>
</dbReference>
<dbReference type="PANTHER" id="PTHR43096:SF48">
    <property type="entry name" value="CHAPERONE PROTEIN DNAJ"/>
    <property type="match status" value="1"/>
</dbReference>
<dbReference type="PANTHER" id="PTHR43096">
    <property type="entry name" value="DNAJ HOMOLOG 1, MITOCHONDRIAL-RELATED"/>
    <property type="match status" value="1"/>
</dbReference>
<dbReference type="Pfam" id="PF00226">
    <property type="entry name" value="DnaJ"/>
    <property type="match status" value="1"/>
</dbReference>
<dbReference type="Pfam" id="PF01556">
    <property type="entry name" value="DnaJ_C"/>
    <property type="match status" value="1"/>
</dbReference>
<dbReference type="Pfam" id="PF00684">
    <property type="entry name" value="DnaJ_CXXCXGXG"/>
    <property type="match status" value="1"/>
</dbReference>
<dbReference type="PRINTS" id="PR00625">
    <property type="entry name" value="JDOMAIN"/>
</dbReference>
<dbReference type="SMART" id="SM00271">
    <property type="entry name" value="DnaJ"/>
    <property type="match status" value="1"/>
</dbReference>
<dbReference type="SUPFAM" id="SSF46565">
    <property type="entry name" value="Chaperone J-domain"/>
    <property type="match status" value="1"/>
</dbReference>
<dbReference type="SUPFAM" id="SSF57938">
    <property type="entry name" value="DnaJ/Hsp40 cysteine-rich domain"/>
    <property type="match status" value="1"/>
</dbReference>
<dbReference type="SUPFAM" id="SSF49493">
    <property type="entry name" value="HSP40/DnaJ peptide-binding domain"/>
    <property type="match status" value="2"/>
</dbReference>
<dbReference type="PROSITE" id="PS50076">
    <property type="entry name" value="DNAJ_2"/>
    <property type="match status" value="1"/>
</dbReference>
<dbReference type="PROSITE" id="PS51188">
    <property type="entry name" value="ZF_CR"/>
    <property type="match status" value="1"/>
</dbReference>
<reference key="1">
    <citation type="journal article" date="2010" name="Appl. Environ. Microbiol.">
        <title>The genome sequence of Psychrobacter arcticus 273-4, a psychroactive Siberian permafrost bacterium, reveals mechanisms for adaptation to low-temperature growth.</title>
        <authorList>
            <person name="Ayala-del-Rio H.L."/>
            <person name="Chain P.S."/>
            <person name="Grzymski J.J."/>
            <person name="Ponder M.A."/>
            <person name="Ivanova N."/>
            <person name="Bergholz P.W."/>
            <person name="Di Bartolo G."/>
            <person name="Hauser L."/>
            <person name="Land M."/>
            <person name="Bakermans C."/>
            <person name="Rodrigues D."/>
            <person name="Klappenbach J."/>
            <person name="Zarka D."/>
            <person name="Larimer F."/>
            <person name="Richardson P."/>
            <person name="Murray A."/>
            <person name="Thomashow M."/>
            <person name="Tiedje J.M."/>
        </authorList>
    </citation>
    <scope>NUCLEOTIDE SEQUENCE [LARGE SCALE GENOMIC DNA]</scope>
    <source>
        <strain>DSM 17307 / VKM B-2377 / 273-4</strain>
    </source>
</reference>
<keyword id="KW-0143">Chaperone</keyword>
<keyword id="KW-0963">Cytoplasm</keyword>
<keyword id="KW-0235">DNA replication</keyword>
<keyword id="KW-0479">Metal-binding</keyword>
<keyword id="KW-1185">Reference proteome</keyword>
<keyword id="KW-0677">Repeat</keyword>
<keyword id="KW-0346">Stress response</keyword>
<keyword id="KW-0862">Zinc</keyword>
<keyword id="KW-0863">Zinc-finger</keyword>
<protein>
    <recommendedName>
        <fullName evidence="1">Chaperone protein DnaJ</fullName>
    </recommendedName>
</protein>